<evidence type="ECO:0000255" key="1">
    <source>
        <dbReference type="HAMAP-Rule" id="MF_00816"/>
    </source>
</evidence>
<dbReference type="EMBL" id="CP000851">
    <property type="protein sequence ID" value="ABV87087.1"/>
    <property type="molecule type" value="Genomic_DNA"/>
</dbReference>
<dbReference type="RefSeq" id="WP_012155007.1">
    <property type="nucleotide sequence ID" value="NC_009901.1"/>
</dbReference>
<dbReference type="SMR" id="A8H3F0"/>
<dbReference type="STRING" id="398579.Spea_1764"/>
<dbReference type="KEGG" id="spl:Spea_1764"/>
<dbReference type="eggNOG" id="COG3082">
    <property type="taxonomic scope" value="Bacteria"/>
</dbReference>
<dbReference type="HOGENOM" id="CLU_175457_0_0_6"/>
<dbReference type="OrthoDB" id="5771474at2"/>
<dbReference type="Proteomes" id="UP000002608">
    <property type="component" value="Chromosome"/>
</dbReference>
<dbReference type="Gene3D" id="1.10.3390.10">
    <property type="entry name" value="YejL-like"/>
    <property type="match status" value="1"/>
</dbReference>
<dbReference type="HAMAP" id="MF_00816">
    <property type="entry name" value="UPF0352"/>
    <property type="match status" value="1"/>
</dbReference>
<dbReference type="InterPro" id="IPR009857">
    <property type="entry name" value="UPF0352"/>
</dbReference>
<dbReference type="InterPro" id="IPR023202">
    <property type="entry name" value="YejL_sf"/>
</dbReference>
<dbReference type="NCBIfam" id="NF010242">
    <property type="entry name" value="PRK13689.1"/>
    <property type="match status" value="1"/>
</dbReference>
<dbReference type="Pfam" id="PF07208">
    <property type="entry name" value="DUF1414"/>
    <property type="match status" value="1"/>
</dbReference>
<dbReference type="PIRSF" id="PIRSF006188">
    <property type="entry name" value="UCP006188"/>
    <property type="match status" value="1"/>
</dbReference>
<dbReference type="SUPFAM" id="SSF158651">
    <property type="entry name" value="YejL-like"/>
    <property type="match status" value="1"/>
</dbReference>
<protein>
    <recommendedName>
        <fullName evidence="1">UPF0352 protein Spea_1764</fullName>
    </recommendedName>
</protein>
<keyword id="KW-1185">Reference proteome</keyword>
<organism>
    <name type="scientific">Shewanella pealeana (strain ATCC 700345 / ANG-SQ1)</name>
    <dbReference type="NCBI Taxonomy" id="398579"/>
    <lineage>
        <taxon>Bacteria</taxon>
        <taxon>Pseudomonadati</taxon>
        <taxon>Pseudomonadota</taxon>
        <taxon>Gammaproteobacteria</taxon>
        <taxon>Alteromonadales</taxon>
        <taxon>Shewanellaceae</taxon>
        <taxon>Shewanella</taxon>
    </lineage>
</organism>
<feature type="chain" id="PRO_1000083822" description="UPF0352 protein Spea_1764">
    <location>
        <begin position="1"/>
        <end position="71"/>
    </location>
</feature>
<proteinExistence type="inferred from homology"/>
<reference key="1">
    <citation type="submission" date="2007-10" db="EMBL/GenBank/DDBJ databases">
        <title>Complete sequence of Shewanella pealeana ATCC 700345.</title>
        <authorList>
            <consortium name="US DOE Joint Genome Institute"/>
            <person name="Copeland A."/>
            <person name="Lucas S."/>
            <person name="Lapidus A."/>
            <person name="Barry K."/>
            <person name="Glavina del Rio T."/>
            <person name="Dalin E."/>
            <person name="Tice H."/>
            <person name="Pitluck S."/>
            <person name="Chertkov O."/>
            <person name="Brettin T."/>
            <person name="Bruce D."/>
            <person name="Detter J.C."/>
            <person name="Han C."/>
            <person name="Schmutz J."/>
            <person name="Larimer F."/>
            <person name="Land M."/>
            <person name="Hauser L."/>
            <person name="Kyrpides N."/>
            <person name="Kim E."/>
            <person name="Zhao J.-S.Z."/>
            <person name="Manno D."/>
            <person name="Hawari J."/>
            <person name="Richardson P."/>
        </authorList>
    </citation>
    <scope>NUCLEOTIDE SEQUENCE [LARGE SCALE GENOMIC DNA]</scope>
    <source>
        <strain>ATCC 700345 / ANG-SQ1</strain>
    </source>
</reference>
<comment type="similarity">
    <text evidence="1">Belongs to the UPF0352 family.</text>
</comment>
<sequence>MAIQSKYSNAQVESIIAELLAVLEKHQSPTDLSLMALGNCVTHLLQKKVPAEAREVVAEQFAKALSRSVKS</sequence>
<name>Y1764_SHEPA</name>
<accession>A8H3F0</accession>
<gene>
    <name type="ordered locus">Spea_1764</name>
</gene>